<organism>
    <name type="scientific">Homo sapiens</name>
    <name type="common">Human</name>
    <dbReference type="NCBI Taxonomy" id="9606"/>
    <lineage>
        <taxon>Eukaryota</taxon>
        <taxon>Metazoa</taxon>
        <taxon>Chordata</taxon>
        <taxon>Craniata</taxon>
        <taxon>Vertebrata</taxon>
        <taxon>Euteleostomi</taxon>
        <taxon>Mammalia</taxon>
        <taxon>Eutheria</taxon>
        <taxon>Euarchontoglires</taxon>
        <taxon>Primates</taxon>
        <taxon>Haplorrhini</taxon>
        <taxon>Catarrhini</taxon>
        <taxon>Hominidae</taxon>
        <taxon>Homo</taxon>
    </lineage>
</organism>
<dbReference type="EMBL" id="AB047362">
    <property type="protein sequence ID" value="BAB69044.1"/>
    <property type="molecule type" value="mRNA"/>
</dbReference>
<dbReference type="EMBL" id="AK091655">
    <property type="protein sequence ID" value="BAC03713.1"/>
    <property type="molecule type" value="mRNA"/>
</dbReference>
<dbReference type="EMBL" id="AC004457">
    <property type="status" value="NOT_ANNOTATED_CDS"/>
    <property type="molecule type" value="Genomic_DNA"/>
</dbReference>
<dbReference type="EMBL" id="AC004613">
    <property type="status" value="NOT_ANNOTATED_CDS"/>
    <property type="molecule type" value="Genomic_DNA"/>
</dbReference>
<dbReference type="EMBL" id="AC004861">
    <property type="status" value="NOT_ANNOTATED_CDS"/>
    <property type="molecule type" value="Genomic_DNA"/>
</dbReference>
<dbReference type="EMBL" id="BC047505">
    <property type="protein sequence ID" value="AAH47505.1"/>
    <property type="molecule type" value="mRNA"/>
</dbReference>
<dbReference type="CCDS" id="CCDS47540.1"/>
<dbReference type="RefSeq" id="NP_689958.1">
    <property type="nucleotide sequence ID" value="NM_152745.3"/>
</dbReference>
<dbReference type="SMR" id="P58417"/>
<dbReference type="BioGRID" id="119028">
    <property type="interactions" value="27"/>
</dbReference>
<dbReference type="FunCoup" id="P58417">
    <property type="interactions" value="122"/>
</dbReference>
<dbReference type="IntAct" id="P58417">
    <property type="interactions" value="23"/>
</dbReference>
<dbReference type="STRING" id="9606.ENSP00000384551"/>
<dbReference type="GlyCosmos" id="P58417">
    <property type="glycosylation" value="6 sites, No reported glycans"/>
</dbReference>
<dbReference type="GlyGen" id="P58417">
    <property type="glycosylation" value="7 sites, 1 O-linked glycan (1 site)"/>
</dbReference>
<dbReference type="iPTMnet" id="P58417"/>
<dbReference type="PhosphoSitePlus" id="P58417"/>
<dbReference type="BioMuta" id="NXPH1"/>
<dbReference type="DMDM" id="17433155"/>
<dbReference type="MassIVE" id="P58417"/>
<dbReference type="PaxDb" id="9606-ENSP00000384551"/>
<dbReference type="PeptideAtlas" id="P58417"/>
<dbReference type="ProteomicsDB" id="57073"/>
<dbReference type="Antibodypedia" id="43889">
    <property type="antibodies" value="242 antibodies from 33 providers"/>
</dbReference>
<dbReference type="DNASU" id="30010"/>
<dbReference type="Ensembl" id="ENST00000405863.6">
    <property type="protein sequence ID" value="ENSP00000384551.1"/>
    <property type="gene ID" value="ENSG00000122584.13"/>
</dbReference>
<dbReference type="GeneID" id="30010"/>
<dbReference type="KEGG" id="hsa:30010"/>
<dbReference type="MANE-Select" id="ENST00000405863.6">
    <property type="protein sequence ID" value="ENSP00000384551.1"/>
    <property type="RefSeq nucleotide sequence ID" value="NM_152745.3"/>
    <property type="RefSeq protein sequence ID" value="NP_689958.1"/>
</dbReference>
<dbReference type="AGR" id="HGNC:20693"/>
<dbReference type="CTD" id="30010"/>
<dbReference type="DisGeNET" id="30010"/>
<dbReference type="GeneCards" id="NXPH1"/>
<dbReference type="HGNC" id="HGNC:20693">
    <property type="gene designation" value="NXPH1"/>
</dbReference>
<dbReference type="HPA" id="ENSG00000122584">
    <property type="expression patterns" value="Group enriched (adrenal gland, brain)"/>
</dbReference>
<dbReference type="MIM" id="604639">
    <property type="type" value="gene"/>
</dbReference>
<dbReference type="neXtProt" id="NX_P58417"/>
<dbReference type="OpenTargets" id="ENSG00000122584"/>
<dbReference type="PharmGKB" id="PA134961263"/>
<dbReference type="VEuPathDB" id="HostDB:ENSG00000122584"/>
<dbReference type="eggNOG" id="ENOG502QQUX">
    <property type="taxonomic scope" value="Eukaryota"/>
</dbReference>
<dbReference type="GeneTree" id="ENSGT00950000182883"/>
<dbReference type="InParanoid" id="P58417"/>
<dbReference type="OMA" id="FCFQVTC"/>
<dbReference type="OrthoDB" id="8690369at2759"/>
<dbReference type="PAN-GO" id="P58417">
    <property type="GO annotations" value="1 GO annotation based on evolutionary models"/>
</dbReference>
<dbReference type="PhylomeDB" id="P58417"/>
<dbReference type="TreeFam" id="TF333047"/>
<dbReference type="PathwayCommons" id="P58417"/>
<dbReference type="SignaLink" id="P58417"/>
<dbReference type="SIGNOR" id="P58417"/>
<dbReference type="BioGRID-ORCS" id="30010">
    <property type="hits" value="10 hits in 1143 CRISPR screens"/>
</dbReference>
<dbReference type="ChiTaRS" id="NXPH1">
    <property type="organism name" value="human"/>
</dbReference>
<dbReference type="GeneWiki" id="NXPH1"/>
<dbReference type="GenomeRNAi" id="30010"/>
<dbReference type="Pharos" id="P58417">
    <property type="development level" value="Tbio"/>
</dbReference>
<dbReference type="PRO" id="PR:P58417"/>
<dbReference type="Proteomes" id="UP000005640">
    <property type="component" value="Chromosome 7"/>
</dbReference>
<dbReference type="RNAct" id="P58417">
    <property type="molecule type" value="protein"/>
</dbReference>
<dbReference type="Bgee" id="ENSG00000122584">
    <property type="expression patterns" value="Expressed in right adrenal gland cortex and 80 other cell types or tissues"/>
</dbReference>
<dbReference type="ExpressionAtlas" id="P58417">
    <property type="expression patterns" value="baseline and differential"/>
</dbReference>
<dbReference type="GO" id="GO:0098982">
    <property type="term" value="C:GABA-ergic synapse"/>
    <property type="evidence" value="ECO:0007669"/>
    <property type="project" value="Ensembl"/>
</dbReference>
<dbReference type="GO" id="GO:0098978">
    <property type="term" value="C:glutamatergic synapse"/>
    <property type="evidence" value="ECO:0007669"/>
    <property type="project" value="Ensembl"/>
</dbReference>
<dbReference type="GO" id="GO:0043083">
    <property type="term" value="C:synaptic cleft"/>
    <property type="evidence" value="ECO:0007669"/>
    <property type="project" value="Ensembl"/>
</dbReference>
<dbReference type="GO" id="GO:0005102">
    <property type="term" value="F:signaling receptor binding"/>
    <property type="evidence" value="ECO:0000318"/>
    <property type="project" value="GO_Central"/>
</dbReference>
<dbReference type="GO" id="GO:0050804">
    <property type="term" value="P:modulation of chemical synaptic transmission"/>
    <property type="evidence" value="ECO:0007669"/>
    <property type="project" value="Ensembl"/>
</dbReference>
<dbReference type="InterPro" id="IPR010450">
    <property type="entry name" value="Nxph"/>
</dbReference>
<dbReference type="InterPro" id="IPR026845">
    <property type="entry name" value="NXPH/NXPE"/>
</dbReference>
<dbReference type="PANTHER" id="PTHR17103">
    <property type="entry name" value="NEUREXOPHILIN"/>
    <property type="match status" value="1"/>
</dbReference>
<dbReference type="PANTHER" id="PTHR17103:SF13">
    <property type="entry name" value="NEUREXOPHILIN-1"/>
    <property type="match status" value="1"/>
</dbReference>
<dbReference type="Pfam" id="PF06312">
    <property type="entry name" value="Neurexophilin"/>
    <property type="match status" value="1"/>
</dbReference>
<dbReference type="PIRSF" id="PIRSF038019">
    <property type="entry name" value="Neurexophilin"/>
    <property type="match status" value="1"/>
</dbReference>
<evidence type="ECO:0000255" key="1"/>
<evidence type="ECO:0000305" key="2"/>
<sequence>MQAACWYVLFLLQPTVYLVTCANLTNGGKSELLKSGSSKSTLKHIWTESSKDLSISRLLSQTFRGKENDTDLDLRYDTPEPYSEQDLWDWLRNSTDLQEPRPRAKRRPIVKTGKFKKMFGWGDFHSNIKTVKLNLLITGKIVDHGNGTFSVYFRHNSTGQGNVSVSLVPPTKIVEFDLAQQTVIDAKDSKSFNCRIEYEKVDKATKNTLCNYDPSKTCYQEQTQSHVSWLCSKPFKVICIYISFYSTDYKLVQKVCPDYNYHSDTPYFPSG</sequence>
<accession>P58417</accession>
<accession>Q8NB31</accession>
<protein>
    <recommendedName>
        <fullName>Neurexophilin-1</fullName>
    </recommendedName>
</protein>
<keyword id="KW-0325">Glycoprotein</keyword>
<keyword id="KW-1267">Proteomics identification</keyword>
<keyword id="KW-1185">Reference proteome</keyword>
<keyword id="KW-0964">Secreted</keyword>
<keyword id="KW-0732">Signal</keyword>
<gene>
    <name type="primary">NXPH1</name>
    <name type="synonym">NPH1</name>
    <name type="ORF">Nbla00697</name>
</gene>
<comment type="function">
    <text evidence="2">May be signaling molecules that resemble neuropeptides and that act by binding to alpha-neurexins and possibly other receptors.</text>
</comment>
<comment type="subcellular location">
    <subcellularLocation>
        <location evidence="2">Secreted</location>
    </subcellularLocation>
</comment>
<comment type="similarity">
    <text evidence="2">Belongs to the neurexophilin family.</text>
</comment>
<reference key="1">
    <citation type="journal article" date="2003" name="Cancer Lett.">
        <title>Neuroblastoma oligo-capping cDNA project: toward the understanding of the genesis and biology of neuroblastoma.</title>
        <authorList>
            <person name="Ohira M."/>
            <person name="Morohashi A."/>
            <person name="Nakamura Y."/>
            <person name="Isogai E."/>
            <person name="Furuya K."/>
            <person name="Hamano S."/>
            <person name="Machida T."/>
            <person name="Aoyama M."/>
            <person name="Fukumura M."/>
            <person name="Miyazaki K."/>
            <person name="Suzuki Y."/>
            <person name="Sugano S."/>
            <person name="Hirato J."/>
            <person name="Nakagawara A."/>
        </authorList>
    </citation>
    <scope>NUCLEOTIDE SEQUENCE [LARGE SCALE MRNA]</scope>
    <source>
        <tissue>Neuroblastoma</tissue>
    </source>
</reference>
<reference key="2">
    <citation type="journal article" date="2004" name="Nat. Genet.">
        <title>Complete sequencing and characterization of 21,243 full-length human cDNAs.</title>
        <authorList>
            <person name="Ota T."/>
            <person name="Suzuki Y."/>
            <person name="Nishikawa T."/>
            <person name="Otsuki T."/>
            <person name="Sugiyama T."/>
            <person name="Irie R."/>
            <person name="Wakamatsu A."/>
            <person name="Hayashi K."/>
            <person name="Sato H."/>
            <person name="Nagai K."/>
            <person name="Kimura K."/>
            <person name="Makita H."/>
            <person name="Sekine M."/>
            <person name="Obayashi M."/>
            <person name="Nishi T."/>
            <person name="Shibahara T."/>
            <person name="Tanaka T."/>
            <person name="Ishii S."/>
            <person name="Yamamoto J."/>
            <person name="Saito K."/>
            <person name="Kawai Y."/>
            <person name="Isono Y."/>
            <person name="Nakamura Y."/>
            <person name="Nagahari K."/>
            <person name="Murakami K."/>
            <person name="Yasuda T."/>
            <person name="Iwayanagi T."/>
            <person name="Wagatsuma M."/>
            <person name="Shiratori A."/>
            <person name="Sudo H."/>
            <person name="Hosoiri T."/>
            <person name="Kaku Y."/>
            <person name="Kodaira H."/>
            <person name="Kondo H."/>
            <person name="Sugawara M."/>
            <person name="Takahashi M."/>
            <person name="Kanda K."/>
            <person name="Yokoi T."/>
            <person name="Furuya T."/>
            <person name="Kikkawa E."/>
            <person name="Omura Y."/>
            <person name="Abe K."/>
            <person name="Kamihara K."/>
            <person name="Katsuta N."/>
            <person name="Sato K."/>
            <person name="Tanikawa M."/>
            <person name="Yamazaki M."/>
            <person name="Ninomiya K."/>
            <person name="Ishibashi T."/>
            <person name="Yamashita H."/>
            <person name="Murakawa K."/>
            <person name="Fujimori K."/>
            <person name="Tanai H."/>
            <person name="Kimata M."/>
            <person name="Watanabe M."/>
            <person name="Hiraoka S."/>
            <person name="Chiba Y."/>
            <person name="Ishida S."/>
            <person name="Ono Y."/>
            <person name="Takiguchi S."/>
            <person name="Watanabe S."/>
            <person name="Yosida M."/>
            <person name="Hotuta T."/>
            <person name="Kusano J."/>
            <person name="Kanehori K."/>
            <person name="Takahashi-Fujii A."/>
            <person name="Hara H."/>
            <person name="Tanase T.-O."/>
            <person name="Nomura Y."/>
            <person name="Togiya S."/>
            <person name="Komai F."/>
            <person name="Hara R."/>
            <person name="Takeuchi K."/>
            <person name="Arita M."/>
            <person name="Imose N."/>
            <person name="Musashino K."/>
            <person name="Yuuki H."/>
            <person name="Oshima A."/>
            <person name="Sasaki N."/>
            <person name="Aotsuka S."/>
            <person name="Yoshikawa Y."/>
            <person name="Matsunawa H."/>
            <person name="Ichihara T."/>
            <person name="Shiohata N."/>
            <person name="Sano S."/>
            <person name="Moriya S."/>
            <person name="Momiyama H."/>
            <person name="Satoh N."/>
            <person name="Takami S."/>
            <person name="Terashima Y."/>
            <person name="Suzuki O."/>
            <person name="Nakagawa S."/>
            <person name="Senoh A."/>
            <person name="Mizoguchi H."/>
            <person name="Goto Y."/>
            <person name="Shimizu F."/>
            <person name="Wakebe H."/>
            <person name="Hishigaki H."/>
            <person name="Watanabe T."/>
            <person name="Sugiyama A."/>
            <person name="Takemoto M."/>
            <person name="Kawakami B."/>
            <person name="Yamazaki M."/>
            <person name="Watanabe K."/>
            <person name="Kumagai A."/>
            <person name="Itakura S."/>
            <person name="Fukuzumi Y."/>
            <person name="Fujimori Y."/>
            <person name="Komiyama M."/>
            <person name="Tashiro H."/>
            <person name="Tanigami A."/>
            <person name="Fujiwara T."/>
            <person name="Ono T."/>
            <person name="Yamada K."/>
            <person name="Fujii Y."/>
            <person name="Ozaki K."/>
            <person name="Hirao M."/>
            <person name="Ohmori Y."/>
            <person name="Kawabata A."/>
            <person name="Hikiji T."/>
            <person name="Kobatake N."/>
            <person name="Inagaki H."/>
            <person name="Ikema Y."/>
            <person name="Okamoto S."/>
            <person name="Okitani R."/>
            <person name="Kawakami T."/>
            <person name="Noguchi S."/>
            <person name="Itoh T."/>
            <person name="Shigeta K."/>
            <person name="Senba T."/>
            <person name="Matsumura K."/>
            <person name="Nakajima Y."/>
            <person name="Mizuno T."/>
            <person name="Morinaga M."/>
            <person name="Sasaki M."/>
            <person name="Togashi T."/>
            <person name="Oyama M."/>
            <person name="Hata H."/>
            <person name="Watanabe M."/>
            <person name="Komatsu T."/>
            <person name="Mizushima-Sugano J."/>
            <person name="Satoh T."/>
            <person name="Shirai Y."/>
            <person name="Takahashi Y."/>
            <person name="Nakagawa K."/>
            <person name="Okumura K."/>
            <person name="Nagase T."/>
            <person name="Nomura N."/>
            <person name="Kikuchi H."/>
            <person name="Masuho Y."/>
            <person name="Yamashita R."/>
            <person name="Nakai K."/>
            <person name="Yada T."/>
            <person name="Nakamura Y."/>
            <person name="Ohara O."/>
            <person name="Isogai T."/>
            <person name="Sugano S."/>
        </authorList>
    </citation>
    <scope>NUCLEOTIDE SEQUENCE [LARGE SCALE MRNA]</scope>
    <source>
        <tissue>Brain</tissue>
    </source>
</reference>
<reference key="3">
    <citation type="journal article" date="2003" name="Nature">
        <title>The DNA sequence of human chromosome 7.</title>
        <authorList>
            <person name="Hillier L.W."/>
            <person name="Fulton R.S."/>
            <person name="Fulton L.A."/>
            <person name="Graves T.A."/>
            <person name="Pepin K.H."/>
            <person name="Wagner-McPherson C."/>
            <person name="Layman D."/>
            <person name="Maas J."/>
            <person name="Jaeger S."/>
            <person name="Walker R."/>
            <person name="Wylie K."/>
            <person name="Sekhon M."/>
            <person name="Becker M.C."/>
            <person name="O'Laughlin M.D."/>
            <person name="Schaller M.E."/>
            <person name="Fewell G.A."/>
            <person name="Delehaunty K.D."/>
            <person name="Miner T.L."/>
            <person name="Nash W.E."/>
            <person name="Cordes M."/>
            <person name="Du H."/>
            <person name="Sun H."/>
            <person name="Edwards J."/>
            <person name="Bradshaw-Cordum H."/>
            <person name="Ali J."/>
            <person name="Andrews S."/>
            <person name="Isak A."/>
            <person name="Vanbrunt A."/>
            <person name="Nguyen C."/>
            <person name="Du F."/>
            <person name="Lamar B."/>
            <person name="Courtney L."/>
            <person name="Kalicki J."/>
            <person name="Ozersky P."/>
            <person name="Bielicki L."/>
            <person name="Scott K."/>
            <person name="Holmes A."/>
            <person name="Harkins R."/>
            <person name="Harris A."/>
            <person name="Strong C.M."/>
            <person name="Hou S."/>
            <person name="Tomlinson C."/>
            <person name="Dauphin-Kohlberg S."/>
            <person name="Kozlowicz-Reilly A."/>
            <person name="Leonard S."/>
            <person name="Rohlfing T."/>
            <person name="Rock S.M."/>
            <person name="Tin-Wollam A.-M."/>
            <person name="Abbott A."/>
            <person name="Minx P."/>
            <person name="Maupin R."/>
            <person name="Strowmatt C."/>
            <person name="Latreille P."/>
            <person name="Miller N."/>
            <person name="Johnson D."/>
            <person name="Murray J."/>
            <person name="Woessner J.P."/>
            <person name="Wendl M.C."/>
            <person name="Yang S.-P."/>
            <person name="Schultz B.R."/>
            <person name="Wallis J.W."/>
            <person name="Spieth J."/>
            <person name="Bieri T.A."/>
            <person name="Nelson J.O."/>
            <person name="Berkowicz N."/>
            <person name="Wohldmann P.E."/>
            <person name="Cook L.L."/>
            <person name="Hickenbotham M.T."/>
            <person name="Eldred J."/>
            <person name="Williams D."/>
            <person name="Bedell J.A."/>
            <person name="Mardis E.R."/>
            <person name="Clifton S.W."/>
            <person name="Chissoe S.L."/>
            <person name="Marra M.A."/>
            <person name="Raymond C."/>
            <person name="Haugen E."/>
            <person name="Gillett W."/>
            <person name="Zhou Y."/>
            <person name="James R."/>
            <person name="Phelps K."/>
            <person name="Iadanoto S."/>
            <person name="Bubb K."/>
            <person name="Simms E."/>
            <person name="Levy R."/>
            <person name="Clendenning J."/>
            <person name="Kaul R."/>
            <person name="Kent W.J."/>
            <person name="Furey T.S."/>
            <person name="Baertsch R.A."/>
            <person name="Brent M.R."/>
            <person name="Keibler E."/>
            <person name="Flicek P."/>
            <person name="Bork P."/>
            <person name="Suyama M."/>
            <person name="Bailey J.A."/>
            <person name="Portnoy M.E."/>
            <person name="Torrents D."/>
            <person name="Chinwalla A.T."/>
            <person name="Gish W.R."/>
            <person name="Eddy S.R."/>
            <person name="McPherson J.D."/>
            <person name="Olson M.V."/>
            <person name="Eichler E.E."/>
            <person name="Green E.D."/>
            <person name="Waterston R.H."/>
            <person name="Wilson R.K."/>
        </authorList>
    </citation>
    <scope>NUCLEOTIDE SEQUENCE [LARGE SCALE GENOMIC DNA]</scope>
</reference>
<reference key="4">
    <citation type="journal article" date="2004" name="Genome Res.">
        <title>The status, quality, and expansion of the NIH full-length cDNA project: the Mammalian Gene Collection (MGC).</title>
        <authorList>
            <consortium name="The MGC Project Team"/>
        </authorList>
    </citation>
    <scope>NUCLEOTIDE SEQUENCE [LARGE SCALE MRNA]</scope>
    <source>
        <tissue>Brain</tissue>
    </source>
</reference>
<name>NXPH1_HUMAN</name>
<feature type="signal peptide" evidence="1">
    <location>
        <begin position="1"/>
        <end position="21"/>
    </location>
</feature>
<feature type="chain" id="PRO_0000020059" description="Neurexophilin-1">
    <location>
        <begin position="22"/>
        <end position="271"/>
    </location>
</feature>
<feature type="region of interest" description="II">
    <location>
        <begin position="22"/>
        <end position="97"/>
    </location>
</feature>
<feature type="region of interest" description="III">
    <location>
        <begin position="98"/>
        <end position="176"/>
    </location>
</feature>
<feature type="region of interest" description="IV (linker domain)">
    <location>
        <begin position="177"/>
        <end position="185"/>
    </location>
</feature>
<feature type="region of interest" description="V (Cys-rich)">
    <location>
        <begin position="186"/>
        <end position="271"/>
    </location>
</feature>
<feature type="glycosylation site" description="N-linked (GlcNAc...) asparagine" evidence="1">
    <location>
        <position position="23"/>
    </location>
</feature>
<feature type="glycosylation site" description="N-linked (GlcNAc...) asparagine" evidence="1">
    <location>
        <position position="68"/>
    </location>
</feature>
<feature type="glycosylation site" description="N-linked (GlcNAc...) asparagine" evidence="1">
    <location>
        <position position="93"/>
    </location>
</feature>
<feature type="glycosylation site" description="N-linked (GlcNAc...) asparagine" evidence="1">
    <location>
        <position position="146"/>
    </location>
</feature>
<feature type="glycosylation site" description="N-linked (GlcNAc...) asparagine" evidence="1">
    <location>
        <position position="156"/>
    </location>
</feature>
<feature type="glycosylation site" description="N-linked (GlcNAc...) asparagine" evidence="1">
    <location>
        <position position="162"/>
    </location>
</feature>
<feature type="sequence conflict" description="In Ref. 2; BAC03713." evidence="2" ref="2">
    <original>N</original>
    <variation>S</variation>
    <location>
        <position position="146"/>
    </location>
</feature>
<proteinExistence type="evidence at protein level"/>